<name>COBD_RHIME</name>
<feature type="chain" id="PRO_1000057216" description="Cobalamin biosynthesis protein CobD">
    <location>
        <begin position="1"/>
        <end position="327"/>
    </location>
</feature>
<feature type="transmembrane region" description="Helical" evidence="1">
    <location>
        <begin position="63"/>
        <end position="83"/>
    </location>
</feature>
<feature type="transmembrane region" description="Helical" evidence="1">
    <location>
        <begin position="84"/>
        <end position="104"/>
    </location>
</feature>
<feature type="transmembrane region" description="Helical" evidence="1">
    <location>
        <begin position="158"/>
        <end position="178"/>
    </location>
</feature>
<feature type="transmembrane region" description="Helical" evidence="1">
    <location>
        <begin position="305"/>
        <end position="325"/>
    </location>
</feature>
<keyword id="KW-1003">Cell membrane</keyword>
<keyword id="KW-0169">Cobalamin biosynthesis</keyword>
<keyword id="KW-0472">Membrane</keyword>
<keyword id="KW-1185">Reference proteome</keyword>
<keyword id="KW-0812">Transmembrane</keyword>
<keyword id="KW-1133">Transmembrane helix</keyword>
<evidence type="ECO:0000255" key="1">
    <source>
        <dbReference type="HAMAP-Rule" id="MF_00024"/>
    </source>
</evidence>
<accession>Q92P50</accession>
<gene>
    <name evidence="1" type="primary">cobD</name>
    <name type="ordered locus">R01943</name>
    <name type="ORF">SMc04279</name>
</gene>
<dbReference type="EMBL" id="AL591688">
    <property type="protein sequence ID" value="CAC46522.1"/>
    <property type="molecule type" value="Genomic_DNA"/>
</dbReference>
<dbReference type="RefSeq" id="NP_386049.1">
    <property type="nucleotide sequence ID" value="NC_003047.1"/>
</dbReference>
<dbReference type="EnsemblBacteria" id="CAC46522">
    <property type="protein sequence ID" value="CAC46522"/>
    <property type="gene ID" value="SMc04279"/>
</dbReference>
<dbReference type="KEGG" id="sme:SMc04279"/>
<dbReference type="PATRIC" id="fig|266834.11.peg.3391"/>
<dbReference type="eggNOG" id="COG1270">
    <property type="taxonomic scope" value="Bacteria"/>
</dbReference>
<dbReference type="HOGENOM" id="CLU_054212_0_1_5"/>
<dbReference type="OrthoDB" id="9811967at2"/>
<dbReference type="UniPathway" id="UPA00148"/>
<dbReference type="Proteomes" id="UP000001976">
    <property type="component" value="Chromosome"/>
</dbReference>
<dbReference type="GO" id="GO:0005886">
    <property type="term" value="C:plasma membrane"/>
    <property type="evidence" value="ECO:0007669"/>
    <property type="project" value="UniProtKB-SubCell"/>
</dbReference>
<dbReference type="GO" id="GO:0015420">
    <property type="term" value="F:ABC-type vitamin B12 transporter activity"/>
    <property type="evidence" value="ECO:0007669"/>
    <property type="project" value="UniProtKB-UniRule"/>
</dbReference>
<dbReference type="GO" id="GO:0048472">
    <property type="term" value="F:threonine-phosphate decarboxylase activity"/>
    <property type="evidence" value="ECO:0007669"/>
    <property type="project" value="InterPro"/>
</dbReference>
<dbReference type="GO" id="GO:0009236">
    <property type="term" value="P:cobalamin biosynthetic process"/>
    <property type="evidence" value="ECO:0007669"/>
    <property type="project" value="UniProtKB-UniRule"/>
</dbReference>
<dbReference type="HAMAP" id="MF_00024">
    <property type="entry name" value="CobD_CbiB"/>
    <property type="match status" value="1"/>
</dbReference>
<dbReference type="InterPro" id="IPR004485">
    <property type="entry name" value="Cobalamin_biosynth_CobD/CbiB"/>
</dbReference>
<dbReference type="NCBIfam" id="TIGR00380">
    <property type="entry name" value="cobal_cbiB"/>
    <property type="match status" value="1"/>
</dbReference>
<dbReference type="PANTHER" id="PTHR34308">
    <property type="entry name" value="COBALAMIN BIOSYNTHESIS PROTEIN CBIB"/>
    <property type="match status" value="1"/>
</dbReference>
<dbReference type="PANTHER" id="PTHR34308:SF1">
    <property type="entry name" value="COBALAMIN BIOSYNTHESIS PROTEIN CBIB"/>
    <property type="match status" value="1"/>
</dbReference>
<dbReference type="Pfam" id="PF03186">
    <property type="entry name" value="CobD_Cbib"/>
    <property type="match status" value="1"/>
</dbReference>
<protein>
    <recommendedName>
        <fullName evidence="1">Cobalamin biosynthesis protein CobD</fullName>
    </recommendedName>
</protein>
<sequence>MSAEILLILVIALLLDRVLGDPDWLWSRLTHPVVFFGKAVEYVDEALNRGEFTKAWLKFRGVVGILVLLAGATALGVVLARLFDVLGALGSLLEVVTVAVFLAQKSLADHVSRVAAGLRRDGLAGGREAVSMIVGRDPNTLDEPAVCRAAIESLAENFSDGVVAPAFWYAVAGLPGLLAYKMLNTADSMIGHKSPKYLHFGWASARLDDLANLPAARLSALLIAAGAYFRRGAEAAKTAIEVARRDHGLHRSPNSGWPEAAMAGATGVQLAGPRIYGGVKVDEPMMNDAGRAVAAIEDIEAAVTVFYAACSVMTFAFAAAALPLLLF</sequence>
<reference key="1">
    <citation type="journal article" date="2001" name="Proc. Natl. Acad. Sci. U.S.A.">
        <title>Analysis of the chromosome sequence of the legume symbiont Sinorhizobium meliloti strain 1021.</title>
        <authorList>
            <person name="Capela D."/>
            <person name="Barloy-Hubler F."/>
            <person name="Gouzy J."/>
            <person name="Bothe G."/>
            <person name="Ampe F."/>
            <person name="Batut J."/>
            <person name="Boistard P."/>
            <person name="Becker A."/>
            <person name="Boutry M."/>
            <person name="Cadieu E."/>
            <person name="Dreano S."/>
            <person name="Gloux S."/>
            <person name="Godrie T."/>
            <person name="Goffeau A."/>
            <person name="Kahn D."/>
            <person name="Kiss E."/>
            <person name="Lelaure V."/>
            <person name="Masuy D."/>
            <person name="Pohl T."/>
            <person name="Portetelle D."/>
            <person name="Puehler A."/>
            <person name="Purnelle B."/>
            <person name="Ramsperger U."/>
            <person name="Renard C."/>
            <person name="Thebault P."/>
            <person name="Vandenbol M."/>
            <person name="Weidner S."/>
            <person name="Galibert F."/>
        </authorList>
    </citation>
    <scope>NUCLEOTIDE SEQUENCE [LARGE SCALE GENOMIC DNA]</scope>
    <source>
        <strain>1021</strain>
    </source>
</reference>
<reference key="2">
    <citation type="journal article" date="2001" name="Science">
        <title>The composite genome of the legume symbiont Sinorhizobium meliloti.</title>
        <authorList>
            <person name="Galibert F."/>
            <person name="Finan T.M."/>
            <person name="Long S.R."/>
            <person name="Puehler A."/>
            <person name="Abola P."/>
            <person name="Ampe F."/>
            <person name="Barloy-Hubler F."/>
            <person name="Barnett M.J."/>
            <person name="Becker A."/>
            <person name="Boistard P."/>
            <person name="Bothe G."/>
            <person name="Boutry M."/>
            <person name="Bowser L."/>
            <person name="Buhrmester J."/>
            <person name="Cadieu E."/>
            <person name="Capela D."/>
            <person name="Chain P."/>
            <person name="Cowie A."/>
            <person name="Davis R.W."/>
            <person name="Dreano S."/>
            <person name="Federspiel N.A."/>
            <person name="Fisher R.F."/>
            <person name="Gloux S."/>
            <person name="Godrie T."/>
            <person name="Goffeau A."/>
            <person name="Golding B."/>
            <person name="Gouzy J."/>
            <person name="Gurjal M."/>
            <person name="Hernandez-Lucas I."/>
            <person name="Hong A."/>
            <person name="Huizar L."/>
            <person name="Hyman R.W."/>
            <person name="Jones T."/>
            <person name="Kahn D."/>
            <person name="Kahn M.L."/>
            <person name="Kalman S."/>
            <person name="Keating D.H."/>
            <person name="Kiss E."/>
            <person name="Komp C."/>
            <person name="Lelaure V."/>
            <person name="Masuy D."/>
            <person name="Palm C."/>
            <person name="Peck M.C."/>
            <person name="Pohl T.M."/>
            <person name="Portetelle D."/>
            <person name="Purnelle B."/>
            <person name="Ramsperger U."/>
            <person name="Surzycki R."/>
            <person name="Thebault P."/>
            <person name="Vandenbol M."/>
            <person name="Vorhoelter F.J."/>
            <person name="Weidner S."/>
            <person name="Wells D.H."/>
            <person name="Wong K."/>
            <person name="Yeh K.-C."/>
            <person name="Batut J."/>
        </authorList>
    </citation>
    <scope>NUCLEOTIDE SEQUENCE [LARGE SCALE GENOMIC DNA]</scope>
    <source>
        <strain>1021</strain>
    </source>
</reference>
<comment type="function">
    <text evidence="1">Converts cobyric acid to cobinamide by the addition of aminopropanol on the F carboxylic group.</text>
</comment>
<comment type="pathway">
    <text evidence="1">Cofactor biosynthesis; adenosylcobalamin biosynthesis.</text>
</comment>
<comment type="subcellular location">
    <subcellularLocation>
        <location evidence="1">Cell membrane</location>
        <topology evidence="1">Multi-pass membrane protein</topology>
    </subcellularLocation>
</comment>
<comment type="similarity">
    <text evidence="1">Belongs to the CobD/CbiB family.</text>
</comment>
<organism>
    <name type="scientific">Rhizobium meliloti (strain 1021)</name>
    <name type="common">Ensifer meliloti</name>
    <name type="synonym">Sinorhizobium meliloti</name>
    <dbReference type="NCBI Taxonomy" id="266834"/>
    <lineage>
        <taxon>Bacteria</taxon>
        <taxon>Pseudomonadati</taxon>
        <taxon>Pseudomonadota</taxon>
        <taxon>Alphaproteobacteria</taxon>
        <taxon>Hyphomicrobiales</taxon>
        <taxon>Rhizobiaceae</taxon>
        <taxon>Sinorhizobium/Ensifer group</taxon>
        <taxon>Sinorhizobium</taxon>
    </lineage>
</organism>
<proteinExistence type="inferred from homology"/>